<evidence type="ECO:0000255" key="1">
    <source>
        <dbReference type="HAMAP-Rule" id="MF_00040"/>
    </source>
</evidence>
<proteinExistence type="inferred from homology"/>
<name>RRF_AZOVD</name>
<accession>C1DSU3</accession>
<sequence length="185" mass="20392">MINEIKKDAQARMKKSLESLEHAFAKIRTGRAHPSILDGVMVSYYGADTPLRQVANVVAEDARTLALTVFDKSMIQAVEKAIMTSDLGLNPATAGTTIRVPMPALTEETRKGYTRQARAEAESARVAVRNIRRDALAQLKDLVKEKEISEDEERRAADEVQKLTDKAIAEVDKALEAKEADLMAV</sequence>
<protein>
    <recommendedName>
        <fullName evidence="1">Ribosome-recycling factor</fullName>
        <shortName evidence="1">RRF</shortName>
    </recommendedName>
    <alternativeName>
        <fullName evidence="1">Ribosome-releasing factor</fullName>
    </alternativeName>
</protein>
<gene>
    <name evidence="1" type="primary">frr</name>
    <name type="ordered locus">Avin_38960</name>
</gene>
<organism>
    <name type="scientific">Azotobacter vinelandii (strain DJ / ATCC BAA-1303)</name>
    <dbReference type="NCBI Taxonomy" id="322710"/>
    <lineage>
        <taxon>Bacteria</taxon>
        <taxon>Pseudomonadati</taxon>
        <taxon>Pseudomonadota</taxon>
        <taxon>Gammaproteobacteria</taxon>
        <taxon>Pseudomonadales</taxon>
        <taxon>Pseudomonadaceae</taxon>
        <taxon>Azotobacter</taxon>
    </lineage>
</organism>
<feature type="chain" id="PRO_1000202089" description="Ribosome-recycling factor">
    <location>
        <begin position="1"/>
        <end position="185"/>
    </location>
</feature>
<keyword id="KW-0963">Cytoplasm</keyword>
<keyword id="KW-0648">Protein biosynthesis</keyword>
<comment type="function">
    <text evidence="1">Responsible for the release of ribosomes from messenger RNA at the termination of protein biosynthesis. May increase the efficiency of translation by recycling ribosomes from one round of translation to another.</text>
</comment>
<comment type="subcellular location">
    <subcellularLocation>
        <location evidence="1">Cytoplasm</location>
    </subcellularLocation>
</comment>
<comment type="similarity">
    <text evidence="1">Belongs to the RRF family.</text>
</comment>
<reference key="1">
    <citation type="journal article" date="2009" name="J. Bacteriol.">
        <title>Genome sequence of Azotobacter vinelandii, an obligate aerobe specialized to support diverse anaerobic metabolic processes.</title>
        <authorList>
            <person name="Setubal J.C."/>
            <person name="Dos Santos P."/>
            <person name="Goldman B.S."/>
            <person name="Ertesvaag H."/>
            <person name="Espin G."/>
            <person name="Rubio L.M."/>
            <person name="Valla S."/>
            <person name="Almeida N.F."/>
            <person name="Balasubramanian D."/>
            <person name="Cromes L."/>
            <person name="Curatti L."/>
            <person name="Du Z."/>
            <person name="Godsy E."/>
            <person name="Goodner B."/>
            <person name="Hellner-Burris K."/>
            <person name="Hernandez J.A."/>
            <person name="Houmiel K."/>
            <person name="Imperial J."/>
            <person name="Kennedy C."/>
            <person name="Larson T.J."/>
            <person name="Latreille P."/>
            <person name="Ligon L.S."/>
            <person name="Lu J."/>
            <person name="Maerk M."/>
            <person name="Miller N.M."/>
            <person name="Norton S."/>
            <person name="O'Carroll I.P."/>
            <person name="Paulsen I."/>
            <person name="Raulfs E.C."/>
            <person name="Roemer R."/>
            <person name="Rosser J."/>
            <person name="Segura D."/>
            <person name="Slater S."/>
            <person name="Stricklin S.L."/>
            <person name="Studholme D.J."/>
            <person name="Sun J."/>
            <person name="Viana C.J."/>
            <person name="Wallin E."/>
            <person name="Wang B."/>
            <person name="Wheeler C."/>
            <person name="Zhu H."/>
            <person name="Dean D.R."/>
            <person name="Dixon R."/>
            <person name="Wood D."/>
        </authorList>
    </citation>
    <scope>NUCLEOTIDE SEQUENCE [LARGE SCALE GENOMIC DNA]</scope>
    <source>
        <strain>DJ / ATCC BAA-1303</strain>
    </source>
</reference>
<dbReference type="EMBL" id="CP001157">
    <property type="protein sequence ID" value="ACO80036.1"/>
    <property type="molecule type" value="Genomic_DNA"/>
</dbReference>
<dbReference type="RefSeq" id="WP_012702411.1">
    <property type="nucleotide sequence ID" value="NC_012560.1"/>
</dbReference>
<dbReference type="SMR" id="C1DSU3"/>
<dbReference type="STRING" id="322710.Avin_38960"/>
<dbReference type="EnsemblBacteria" id="ACO80036">
    <property type="protein sequence ID" value="ACO80036"/>
    <property type="gene ID" value="Avin_38960"/>
</dbReference>
<dbReference type="GeneID" id="88186854"/>
<dbReference type="KEGG" id="avn:Avin_38960"/>
<dbReference type="eggNOG" id="COG0233">
    <property type="taxonomic scope" value="Bacteria"/>
</dbReference>
<dbReference type="HOGENOM" id="CLU_073981_2_1_6"/>
<dbReference type="OrthoDB" id="9804006at2"/>
<dbReference type="Proteomes" id="UP000002424">
    <property type="component" value="Chromosome"/>
</dbReference>
<dbReference type="GO" id="GO:0005829">
    <property type="term" value="C:cytosol"/>
    <property type="evidence" value="ECO:0007669"/>
    <property type="project" value="GOC"/>
</dbReference>
<dbReference type="GO" id="GO:0043023">
    <property type="term" value="F:ribosomal large subunit binding"/>
    <property type="evidence" value="ECO:0007669"/>
    <property type="project" value="TreeGrafter"/>
</dbReference>
<dbReference type="GO" id="GO:0002184">
    <property type="term" value="P:cytoplasmic translational termination"/>
    <property type="evidence" value="ECO:0007669"/>
    <property type="project" value="TreeGrafter"/>
</dbReference>
<dbReference type="CDD" id="cd00520">
    <property type="entry name" value="RRF"/>
    <property type="match status" value="1"/>
</dbReference>
<dbReference type="FunFam" id="1.10.132.20:FF:000001">
    <property type="entry name" value="Ribosome-recycling factor"/>
    <property type="match status" value="1"/>
</dbReference>
<dbReference type="FunFam" id="3.30.1360.40:FF:000001">
    <property type="entry name" value="Ribosome-recycling factor"/>
    <property type="match status" value="1"/>
</dbReference>
<dbReference type="Gene3D" id="3.30.1360.40">
    <property type="match status" value="1"/>
</dbReference>
<dbReference type="Gene3D" id="1.10.132.20">
    <property type="entry name" value="Ribosome-recycling factor"/>
    <property type="match status" value="1"/>
</dbReference>
<dbReference type="HAMAP" id="MF_00040">
    <property type="entry name" value="RRF"/>
    <property type="match status" value="1"/>
</dbReference>
<dbReference type="InterPro" id="IPR002661">
    <property type="entry name" value="Ribosome_recyc_fac"/>
</dbReference>
<dbReference type="InterPro" id="IPR023584">
    <property type="entry name" value="Ribosome_recyc_fac_dom"/>
</dbReference>
<dbReference type="InterPro" id="IPR036191">
    <property type="entry name" value="RRF_sf"/>
</dbReference>
<dbReference type="NCBIfam" id="TIGR00496">
    <property type="entry name" value="frr"/>
    <property type="match status" value="1"/>
</dbReference>
<dbReference type="PANTHER" id="PTHR20982:SF3">
    <property type="entry name" value="MITOCHONDRIAL RIBOSOME RECYCLING FACTOR PSEUDO 1"/>
    <property type="match status" value="1"/>
</dbReference>
<dbReference type="PANTHER" id="PTHR20982">
    <property type="entry name" value="RIBOSOME RECYCLING FACTOR"/>
    <property type="match status" value="1"/>
</dbReference>
<dbReference type="Pfam" id="PF01765">
    <property type="entry name" value="RRF"/>
    <property type="match status" value="1"/>
</dbReference>
<dbReference type="SUPFAM" id="SSF55194">
    <property type="entry name" value="Ribosome recycling factor, RRF"/>
    <property type="match status" value="1"/>
</dbReference>